<evidence type="ECO:0000255" key="1">
    <source>
        <dbReference type="HAMAP-Rule" id="MF_00344"/>
    </source>
</evidence>
<accession>Q6ASN4</accession>
<reference key="1">
    <citation type="journal article" date="2004" name="Nucleic Acids Res.">
        <title>Comparative analysis of the Borrelia garinii genome.</title>
        <authorList>
            <person name="Gloeckner G."/>
            <person name="Lehmann R."/>
            <person name="Romualdi A."/>
            <person name="Pradella S."/>
            <person name="Schulte-Spechtel U."/>
            <person name="Schilhabel M."/>
            <person name="Wilske B."/>
            <person name="Suehnel J."/>
            <person name="Platzer M."/>
        </authorList>
    </citation>
    <scope>NUCLEOTIDE SEQUENCE [LARGE SCALE GENOMIC DNA]</scope>
    <source>
        <strain>ATCC BAA-2496 / DSM 23469 / PBi</strain>
    </source>
</reference>
<name>GUAA_BORGP</name>
<proteinExistence type="inferred from homology"/>
<sequence>MKYALIRKLLFVLRTYMMNVRAILVLDFGSQYSQLIARRIREIGVYTKVIPYYTPLKEIKNMNIAGIILSGGPASVYAKDAPTLNMEIFNLKIPVLGICYGMQLIVKLFGGLVSKDYKQEYGSSEIFLKNEKSLLFSELPNKFQIIMSHGDSIEKIPNNFKQLAFTKNCIASISNEDQKIYGLQFHPEVTHSEFGDQILKNFVFKICQSQTNWSLESNVETIVEKIKLKVGSKKVILGLSGGTDSLVCALLIKKAIKENLICVFVNTGLLRKNEDKKILELKHQYDLNIKYIDASEKFLNYLKNISDPEEKRKIIGKEFVNVFEKITLEDQNIEYLAQGTIYSDVIESKSKNNASSKIKSHHNVGGLPDKMRLKLLEPLNEFFKDEIIQIGINLGIKKEALYRHPFPGPGLAIRIIGEVTQEKINILQEAENILTEELFTNDLYYEIRQAFVVLLPVKSVGVMGDQRTYEYTAVIRCVNTQDFMTAEWTELPYNFLRKVSSRIINEVRGINRVCYDISSKPPSTIEWE</sequence>
<geneLocation type="plasmid">
    <name>cp26</name>
</geneLocation>
<dbReference type="EC" id="6.3.5.2" evidence="1"/>
<dbReference type="EMBL" id="CP000014">
    <property type="protein sequence ID" value="AAT93750.1"/>
    <property type="molecule type" value="Genomic_DNA"/>
</dbReference>
<dbReference type="SMR" id="Q6ASN4"/>
<dbReference type="KEGG" id="bga:BGB17"/>
<dbReference type="HOGENOM" id="CLU_014340_0_5_12"/>
<dbReference type="UniPathway" id="UPA00189">
    <property type="reaction ID" value="UER00296"/>
</dbReference>
<dbReference type="Proteomes" id="UP000002276">
    <property type="component" value="Plasmid cp26"/>
</dbReference>
<dbReference type="GO" id="GO:0005829">
    <property type="term" value="C:cytosol"/>
    <property type="evidence" value="ECO:0007669"/>
    <property type="project" value="TreeGrafter"/>
</dbReference>
<dbReference type="GO" id="GO:0005524">
    <property type="term" value="F:ATP binding"/>
    <property type="evidence" value="ECO:0007669"/>
    <property type="project" value="UniProtKB-UniRule"/>
</dbReference>
<dbReference type="GO" id="GO:0003921">
    <property type="term" value="F:GMP synthase activity"/>
    <property type="evidence" value="ECO:0007669"/>
    <property type="project" value="InterPro"/>
</dbReference>
<dbReference type="CDD" id="cd01742">
    <property type="entry name" value="GATase1_GMP_Synthase"/>
    <property type="match status" value="1"/>
</dbReference>
<dbReference type="CDD" id="cd01997">
    <property type="entry name" value="GMP_synthase_C"/>
    <property type="match status" value="1"/>
</dbReference>
<dbReference type="FunFam" id="3.30.300.10:FF:000002">
    <property type="entry name" value="GMP synthase [glutamine-hydrolyzing]"/>
    <property type="match status" value="1"/>
</dbReference>
<dbReference type="FunFam" id="3.40.50.880:FF:000001">
    <property type="entry name" value="GMP synthase [glutamine-hydrolyzing]"/>
    <property type="match status" value="1"/>
</dbReference>
<dbReference type="Gene3D" id="3.30.300.10">
    <property type="match status" value="1"/>
</dbReference>
<dbReference type="Gene3D" id="3.40.50.880">
    <property type="match status" value="1"/>
</dbReference>
<dbReference type="Gene3D" id="3.40.50.620">
    <property type="entry name" value="HUPs"/>
    <property type="match status" value="1"/>
</dbReference>
<dbReference type="HAMAP" id="MF_00344">
    <property type="entry name" value="GMP_synthase"/>
    <property type="match status" value="1"/>
</dbReference>
<dbReference type="InterPro" id="IPR029062">
    <property type="entry name" value="Class_I_gatase-like"/>
</dbReference>
<dbReference type="InterPro" id="IPR017926">
    <property type="entry name" value="GATASE"/>
</dbReference>
<dbReference type="InterPro" id="IPR001674">
    <property type="entry name" value="GMP_synth_C"/>
</dbReference>
<dbReference type="InterPro" id="IPR004739">
    <property type="entry name" value="GMP_synth_GATase"/>
</dbReference>
<dbReference type="InterPro" id="IPR022955">
    <property type="entry name" value="GMP_synthase"/>
</dbReference>
<dbReference type="InterPro" id="IPR025777">
    <property type="entry name" value="GMPS_ATP_PPase_dom"/>
</dbReference>
<dbReference type="InterPro" id="IPR022310">
    <property type="entry name" value="NAD/GMP_synthase"/>
</dbReference>
<dbReference type="InterPro" id="IPR014729">
    <property type="entry name" value="Rossmann-like_a/b/a_fold"/>
</dbReference>
<dbReference type="NCBIfam" id="TIGR00884">
    <property type="entry name" value="guaA_Cterm"/>
    <property type="match status" value="1"/>
</dbReference>
<dbReference type="NCBIfam" id="TIGR00888">
    <property type="entry name" value="guaA_Nterm"/>
    <property type="match status" value="1"/>
</dbReference>
<dbReference type="NCBIfam" id="NF000848">
    <property type="entry name" value="PRK00074.1"/>
    <property type="match status" value="1"/>
</dbReference>
<dbReference type="PANTHER" id="PTHR11922:SF2">
    <property type="entry name" value="GMP SYNTHASE [GLUTAMINE-HYDROLYZING]"/>
    <property type="match status" value="1"/>
</dbReference>
<dbReference type="PANTHER" id="PTHR11922">
    <property type="entry name" value="GMP SYNTHASE-RELATED"/>
    <property type="match status" value="1"/>
</dbReference>
<dbReference type="Pfam" id="PF00117">
    <property type="entry name" value="GATase"/>
    <property type="match status" value="1"/>
</dbReference>
<dbReference type="Pfam" id="PF00958">
    <property type="entry name" value="GMP_synt_C"/>
    <property type="match status" value="1"/>
</dbReference>
<dbReference type="Pfam" id="PF02540">
    <property type="entry name" value="NAD_synthase"/>
    <property type="match status" value="1"/>
</dbReference>
<dbReference type="PRINTS" id="PR00097">
    <property type="entry name" value="ANTSNTHASEII"/>
</dbReference>
<dbReference type="PRINTS" id="PR00099">
    <property type="entry name" value="CPSGATASE"/>
</dbReference>
<dbReference type="PRINTS" id="PR00096">
    <property type="entry name" value="GATASE"/>
</dbReference>
<dbReference type="SUPFAM" id="SSF52402">
    <property type="entry name" value="Adenine nucleotide alpha hydrolases-like"/>
    <property type="match status" value="1"/>
</dbReference>
<dbReference type="SUPFAM" id="SSF52317">
    <property type="entry name" value="Class I glutamine amidotransferase-like"/>
    <property type="match status" value="1"/>
</dbReference>
<dbReference type="SUPFAM" id="SSF54810">
    <property type="entry name" value="GMP synthetase C-terminal dimerisation domain"/>
    <property type="match status" value="1"/>
</dbReference>
<dbReference type="PROSITE" id="PS51273">
    <property type="entry name" value="GATASE_TYPE_1"/>
    <property type="match status" value="1"/>
</dbReference>
<dbReference type="PROSITE" id="PS51553">
    <property type="entry name" value="GMPS_ATP_PPASE"/>
    <property type="match status" value="1"/>
</dbReference>
<feature type="chain" id="PRO_0000229408" description="GMP synthase [glutamine-hydrolyzing]">
    <location>
        <begin position="1"/>
        <end position="528"/>
    </location>
</feature>
<feature type="domain" description="Glutamine amidotransferase type-1" evidence="1">
    <location>
        <begin position="22"/>
        <end position="212"/>
    </location>
</feature>
<feature type="domain" description="GMPS ATP-PPase" evidence="1">
    <location>
        <begin position="213"/>
        <end position="403"/>
    </location>
</feature>
<feature type="active site" description="Nucleophile" evidence="1">
    <location>
        <position position="99"/>
    </location>
</feature>
<feature type="active site" evidence="1">
    <location>
        <position position="186"/>
    </location>
</feature>
<feature type="active site" evidence="1">
    <location>
        <position position="188"/>
    </location>
</feature>
<feature type="binding site" evidence="1">
    <location>
        <begin position="240"/>
        <end position="246"/>
    </location>
    <ligand>
        <name>ATP</name>
        <dbReference type="ChEBI" id="CHEBI:30616"/>
    </ligand>
</feature>
<gene>
    <name evidence="1" type="primary">guaA</name>
    <name type="ordered locus">BGB17</name>
</gene>
<keyword id="KW-0067">ATP-binding</keyword>
<keyword id="KW-0315">Glutamine amidotransferase</keyword>
<keyword id="KW-0332">GMP biosynthesis</keyword>
<keyword id="KW-0436">Ligase</keyword>
<keyword id="KW-0547">Nucleotide-binding</keyword>
<keyword id="KW-0614">Plasmid</keyword>
<keyword id="KW-0658">Purine biosynthesis</keyword>
<comment type="function">
    <text evidence="1">Catalyzes the synthesis of GMP from XMP.</text>
</comment>
<comment type="catalytic activity">
    <reaction evidence="1">
        <text>XMP + L-glutamine + ATP + H2O = GMP + L-glutamate + AMP + diphosphate + 2 H(+)</text>
        <dbReference type="Rhea" id="RHEA:11680"/>
        <dbReference type="ChEBI" id="CHEBI:15377"/>
        <dbReference type="ChEBI" id="CHEBI:15378"/>
        <dbReference type="ChEBI" id="CHEBI:29985"/>
        <dbReference type="ChEBI" id="CHEBI:30616"/>
        <dbReference type="ChEBI" id="CHEBI:33019"/>
        <dbReference type="ChEBI" id="CHEBI:57464"/>
        <dbReference type="ChEBI" id="CHEBI:58115"/>
        <dbReference type="ChEBI" id="CHEBI:58359"/>
        <dbReference type="ChEBI" id="CHEBI:456215"/>
        <dbReference type="EC" id="6.3.5.2"/>
    </reaction>
</comment>
<comment type="pathway">
    <text evidence="1">Purine metabolism; GMP biosynthesis; GMP from XMP (L-Gln route): step 1/1.</text>
</comment>
<comment type="subunit">
    <text evidence="1">Homodimer.</text>
</comment>
<organism>
    <name type="scientific">Borrelia garinii subsp. bavariensis (strain ATCC BAA-2496 / DSM 23469 / PBi)</name>
    <name type="common">Borreliella bavariensis</name>
    <dbReference type="NCBI Taxonomy" id="290434"/>
    <lineage>
        <taxon>Bacteria</taxon>
        <taxon>Pseudomonadati</taxon>
        <taxon>Spirochaetota</taxon>
        <taxon>Spirochaetia</taxon>
        <taxon>Spirochaetales</taxon>
        <taxon>Borreliaceae</taxon>
        <taxon>Borreliella</taxon>
    </lineage>
</organism>
<protein>
    <recommendedName>
        <fullName evidence="1">GMP synthase [glutamine-hydrolyzing]</fullName>
        <ecNumber evidence="1">6.3.5.2</ecNumber>
    </recommendedName>
    <alternativeName>
        <fullName evidence="1">GMP synthetase</fullName>
    </alternativeName>
    <alternativeName>
        <fullName evidence="1">Glutamine amidotransferase</fullName>
    </alternativeName>
</protein>